<accession>Q7VFT5</accession>
<dbReference type="EC" id="7.1.1.-" evidence="1"/>
<dbReference type="EMBL" id="AE017125">
    <property type="protein sequence ID" value="AAP78187.1"/>
    <property type="molecule type" value="Genomic_DNA"/>
</dbReference>
<dbReference type="RefSeq" id="WP_011116430.1">
    <property type="nucleotide sequence ID" value="NC_004917.1"/>
</dbReference>
<dbReference type="SMR" id="Q7VFT5"/>
<dbReference type="STRING" id="235279.HH_1590"/>
<dbReference type="KEGG" id="hhe:HH_1590"/>
<dbReference type="eggNOG" id="COG1007">
    <property type="taxonomic scope" value="Bacteria"/>
</dbReference>
<dbReference type="HOGENOM" id="CLU_007100_1_4_7"/>
<dbReference type="OrthoDB" id="9768329at2"/>
<dbReference type="Proteomes" id="UP000002495">
    <property type="component" value="Chromosome"/>
</dbReference>
<dbReference type="GO" id="GO:0005886">
    <property type="term" value="C:plasma membrane"/>
    <property type="evidence" value="ECO:0007669"/>
    <property type="project" value="UniProtKB-SubCell"/>
</dbReference>
<dbReference type="GO" id="GO:0008137">
    <property type="term" value="F:NADH dehydrogenase (ubiquinone) activity"/>
    <property type="evidence" value="ECO:0007669"/>
    <property type="project" value="InterPro"/>
</dbReference>
<dbReference type="GO" id="GO:0050136">
    <property type="term" value="F:NADH:ubiquinone reductase (non-electrogenic) activity"/>
    <property type="evidence" value="ECO:0007669"/>
    <property type="project" value="UniProtKB-UniRule"/>
</dbReference>
<dbReference type="GO" id="GO:0048038">
    <property type="term" value="F:quinone binding"/>
    <property type="evidence" value="ECO:0007669"/>
    <property type="project" value="UniProtKB-KW"/>
</dbReference>
<dbReference type="GO" id="GO:0042773">
    <property type="term" value="P:ATP synthesis coupled electron transport"/>
    <property type="evidence" value="ECO:0007669"/>
    <property type="project" value="InterPro"/>
</dbReference>
<dbReference type="HAMAP" id="MF_00445">
    <property type="entry name" value="NDH1_NuoN_1"/>
    <property type="match status" value="1"/>
</dbReference>
<dbReference type="InterPro" id="IPR010096">
    <property type="entry name" value="NADH-Q_OxRdtase_suN/2"/>
</dbReference>
<dbReference type="InterPro" id="IPR001750">
    <property type="entry name" value="ND/Mrp_TM"/>
</dbReference>
<dbReference type="NCBIfam" id="TIGR01770">
    <property type="entry name" value="NDH_I_N"/>
    <property type="match status" value="1"/>
</dbReference>
<dbReference type="NCBIfam" id="NF004444">
    <property type="entry name" value="PRK05777.2-2"/>
    <property type="match status" value="1"/>
</dbReference>
<dbReference type="PANTHER" id="PTHR22773">
    <property type="entry name" value="NADH DEHYDROGENASE"/>
    <property type="match status" value="1"/>
</dbReference>
<dbReference type="Pfam" id="PF00361">
    <property type="entry name" value="Proton_antipo_M"/>
    <property type="match status" value="1"/>
</dbReference>
<gene>
    <name evidence="1" type="primary">nuoN</name>
    <name type="ordered locus">HH_1590</name>
</gene>
<reference key="1">
    <citation type="journal article" date="2003" name="Proc. Natl. Acad. Sci. U.S.A.">
        <title>The complete genome sequence of the carcinogenic bacterium Helicobacter hepaticus.</title>
        <authorList>
            <person name="Suerbaum S."/>
            <person name="Josenhans C."/>
            <person name="Sterzenbach T."/>
            <person name="Drescher B."/>
            <person name="Brandt P."/>
            <person name="Bell M."/>
            <person name="Droege M."/>
            <person name="Fartmann B."/>
            <person name="Fischer H.-P."/>
            <person name="Ge Z."/>
            <person name="Hoerster A."/>
            <person name="Holland R."/>
            <person name="Klein K."/>
            <person name="Koenig J."/>
            <person name="Macko L."/>
            <person name="Mendz G.L."/>
            <person name="Nyakatura G."/>
            <person name="Schauer D.B."/>
            <person name="Shen Z."/>
            <person name="Weber J."/>
            <person name="Frosch M."/>
            <person name="Fox J.G."/>
        </authorList>
    </citation>
    <scope>NUCLEOTIDE SEQUENCE [LARGE SCALE GENOMIC DNA]</scope>
    <source>
        <strain>ATCC 51449 / 3B1</strain>
    </source>
</reference>
<keyword id="KW-0997">Cell inner membrane</keyword>
<keyword id="KW-1003">Cell membrane</keyword>
<keyword id="KW-0472">Membrane</keyword>
<keyword id="KW-0520">NAD</keyword>
<keyword id="KW-0874">Quinone</keyword>
<keyword id="KW-1185">Reference proteome</keyword>
<keyword id="KW-1278">Translocase</keyword>
<keyword id="KW-0812">Transmembrane</keyword>
<keyword id="KW-1133">Transmembrane helix</keyword>
<keyword id="KW-0813">Transport</keyword>
<keyword id="KW-0830">Ubiquinone</keyword>
<sequence length="492" mass="54788">MPESMSFSLNQLNLQLLIPMCISLFGGIILLGVGVFNKTKSRDLYITISMLFVVLNLGFLFLEGNPIRQFGFFNLLLVDGISLLTQIIMLLATFVLLLFFMNQNNLPETQGAEFYALLLFSIAGFAFMASSQNLILILLGLETASLCLYALIALHNQKSAFEASIKYFIMGALATTFYAFGAMLLYAATGSVDIISIATFLHQQSYQPSILVFAGFVFLLCALGFKVTLVPFHSWGPDVYEGSNALLAAFIAIVPKIVTFAVIIRIFSVFIDSHSAFVEYTLYVIVVLTMTIPNLIALTQKDVKRMLAYSSISHSGFVLAAVLINTPQSHSVIFFYWFLFLFANIGAFGILWLSVDCKKNYQTQISHPFEKFSGMIKTNPTLAILLTLFMFALAGIPPFCVFWGKMYLMQSAISANYTILALIMAINSIIAGFYYLKLVIYIFAKEPYEIKDSQSSLELSSKFALSITAFVSVACLFMVQNLLEIIEKYILK</sequence>
<proteinExistence type="inferred from homology"/>
<evidence type="ECO:0000255" key="1">
    <source>
        <dbReference type="HAMAP-Rule" id="MF_00445"/>
    </source>
</evidence>
<protein>
    <recommendedName>
        <fullName evidence="1">NADH-quinone oxidoreductase subunit N</fullName>
        <ecNumber evidence="1">7.1.1.-</ecNumber>
    </recommendedName>
    <alternativeName>
        <fullName evidence="1">NADH dehydrogenase I subunit N</fullName>
    </alternativeName>
    <alternativeName>
        <fullName evidence="1">NDH-1 subunit N</fullName>
    </alternativeName>
</protein>
<name>NUON_HELHP</name>
<comment type="function">
    <text evidence="1">NDH-1 shuttles electrons from NADH, via FMN and iron-sulfur (Fe-S) centers, to quinones in the respiratory chain. The immediate electron acceptor for the enzyme in this species is believed to be ubiquinone. Couples the redox reaction to proton translocation (for every two electrons transferred, four hydrogen ions are translocated across the cytoplasmic membrane), and thus conserves the redox energy in a proton gradient.</text>
</comment>
<comment type="catalytic activity">
    <reaction evidence="1">
        <text>a quinone + NADH + 5 H(+)(in) = a quinol + NAD(+) + 4 H(+)(out)</text>
        <dbReference type="Rhea" id="RHEA:57888"/>
        <dbReference type="ChEBI" id="CHEBI:15378"/>
        <dbReference type="ChEBI" id="CHEBI:24646"/>
        <dbReference type="ChEBI" id="CHEBI:57540"/>
        <dbReference type="ChEBI" id="CHEBI:57945"/>
        <dbReference type="ChEBI" id="CHEBI:132124"/>
    </reaction>
</comment>
<comment type="subunit">
    <text evidence="1">NDH-1 is composed of 14 different subunits. Subunits NuoA, H, J, K, L, M, N constitute the membrane sector of the complex.</text>
</comment>
<comment type="subcellular location">
    <subcellularLocation>
        <location evidence="1">Cell inner membrane</location>
        <topology evidence="1">Multi-pass membrane protein</topology>
    </subcellularLocation>
</comment>
<comment type="similarity">
    <text evidence="1">Belongs to the complex I subunit 2 family.</text>
</comment>
<feature type="chain" id="PRO_0000391160" description="NADH-quinone oxidoreductase subunit N">
    <location>
        <begin position="1"/>
        <end position="492"/>
    </location>
</feature>
<feature type="transmembrane region" description="Helical" evidence="1">
    <location>
        <begin position="16"/>
        <end position="36"/>
    </location>
</feature>
<feature type="transmembrane region" description="Helical" evidence="1">
    <location>
        <begin position="44"/>
        <end position="64"/>
    </location>
</feature>
<feature type="transmembrane region" description="Helical" evidence="1">
    <location>
        <begin position="81"/>
        <end position="101"/>
    </location>
</feature>
<feature type="transmembrane region" description="Helical" evidence="1">
    <location>
        <begin position="111"/>
        <end position="131"/>
    </location>
</feature>
<feature type="transmembrane region" description="Helical" evidence="1">
    <location>
        <begin position="134"/>
        <end position="154"/>
    </location>
</feature>
<feature type="transmembrane region" description="Helical" evidence="1">
    <location>
        <begin position="168"/>
        <end position="188"/>
    </location>
</feature>
<feature type="transmembrane region" description="Helical" evidence="1">
    <location>
        <begin position="210"/>
        <end position="230"/>
    </location>
</feature>
<feature type="transmembrane region" description="Helical" evidence="1">
    <location>
        <begin position="244"/>
        <end position="264"/>
    </location>
</feature>
<feature type="transmembrane region" description="Helical" evidence="1">
    <location>
        <begin position="276"/>
        <end position="296"/>
    </location>
</feature>
<feature type="transmembrane region" description="Helical" evidence="1">
    <location>
        <begin position="306"/>
        <end position="326"/>
    </location>
</feature>
<feature type="transmembrane region" description="Helical" evidence="1">
    <location>
        <begin position="332"/>
        <end position="352"/>
    </location>
</feature>
<feature type="transmembrane region" description="Helical" evidence="1">
    <location>
        <begin position="382"/>
        <end position="402"/>
    </location>
</feature>
<feature type="transmembrane region" description="Helical" evidence="1">
    <location>
        <begin position="423"/>
        <end position="443"/>
    </location>
</feature>
<feature type="transmembrane region" description="Helical" evidence="1">
    <location>
        <begin position="463"/>
        <end position="483"/>
    </location>
</feature>
<organism>
    <name type="scientific">Helicobacter hepaticus (strain ATCC 51449 / 3B1)</name>
    <dbReference type="NCBI Taxonomy" id="235279"/>
    <lineage>
        <taxon>Bacteria</taxon>
        <taxon>Pseudomonadati</taxon>
        <taxon>Campylobacterota</taxon>
        <taxon>Epsilonproteobacteria</taxon>
        <taxon>Campylobacterales</taxon>
        <taxon>Helicobacteraceae</taxon>
        <taxon>Helicobacter</taxon>
    </lineage>
</organism>